<proteinExistence type="inferred from homology"/>
<gene>
    <name type="ordered locus">VF_0433</name>
</gene>
<comment type="function">
    <text evidence="1">Could be a nuclease involved in processing of the 5'-end of pre-16S rRNA.</text>
</comment>
<comment type="subcellular location">
    <subcellularLocation>
        <location evidence="1">Cytoplasm</location>
    </subcellularLocation>
</comment>
<comment type="similarity">
    <text evidence="1">Belongs to the YqgF nuclease family.</text>
</comment>
<protein>
    <recommendedName>
        <fullName evidence="1">Putative pre-16S rRNA nuclease</fullName>
        <ecNumber evidence="1">3.1.-.-</ecNumber>
    </recommendedName>
</protein>
<feature type="chain" id="PRO_0000172170" description="Putative pre-16S rRNA nuclease">
    <location>
        <begin position="1"/>
        <end position="141"/>
    </location>
</feature>
<accession>Q5E7R8</accession>
<keyword id="KW-0963">Cytoplasm</keyword>
<keyword id="KW-0378">Hydrolase</keyword>
<keyword id="KW-0540">Nuclease</keyword>
<keyword id="KW-1185">Reference proteome</keyword>
<keyword id="KW-0690">Ribosome biogenesis</keyword>
<reference key="1">
    <citation type="journal article" date="2005" name="Proc. Natl. Acad. Sci. U.S.A.">
        <title>Complete genome sequence of Vibrio fischeri: a symbiotic bacterium with pathogenic congeners.</title>
        <authorList>
            <person name="Ruby E.G."/>
            <person name="Urbanowski M."/>
            <person name="Campbell J."/>
            <person name="Dunn A."/>
            <person name="Faini M."/>
            <person name="Gunsalus R."/>
            <person name="Lostroh P."/>
            <person name="Lupp C."/>
            <person name="McCann J."/>
            <person name="Millikan D."/>
            <person name="Schaefer A."/>
            <person name="Stabb E."/>
            <person name="Stevens A."/>
            <person name="Visick K."/>
            <person name="Whistler C."/>
            <person name="Greenberg E.P."/>
        </authorList>
    </citation>
    <scope>NUCLEOTIDE SEQUENCE [LARGE SCALE GENOMIC DNA]</scope>
    <source>
        <strain>ATCC 700601 / ES114</strain>
    </source>
</reference>
<dbReference type="EC" id="3.1.-.-" evidence="1"/>
<dbReference type="EMBL" id="CP000020">
    <property type="protein sequence ID" value="AAW84928.1"/>
    <property type="molecule type" value="Genomic_DNA"/>
</dbReference>
<dbReference type="RefSeq" id="YP_203816.1">
    <property type="nucleotide sequence ID" value="NC_006840.2"/>
</dbReference>
<dbReference type="SMR" id="Q5E7R8"/>
<dbReference type="STRING" id="312309.VF_0433"/>
<dbReference type="EnsemblBacteria" id="AAW84928">
    <property type="protein sequence ID" value="AAW84928"/>
    <property type="gene ID" value="VF_0433"/>
</dbReference>
<dbReference type="GeneID" id="54163070"/>
<dbReference type="KEGG" id="vfi:VF_0433"/>
<dbReference type="PATRIC" id="fig|312309.11.peg.423"/>
<dbReference type="eggNOG" id="COG0816">
    <property type="taxonomic scope" value="Bacteria"/>
</dbReference>
<dbReference type="HOGENOM" id="CLU_098240_3_0_6"/>
<dbReference type="OrthoDB" id="9796140at2"/>
<dbReference type="Proteomes" id="UP000000537">
    <property type="component" value="Chromosome I"/>
</dbReference>
<dbReference type="GO" id="GO:0005829">
    <property type="term" value="C:cytosol"/>
    <property type="evidence" value="ECO:0007669"/>
    <property type="project" value="TreeGrafter"/>
</dbReference>
<dbReference type="GO" id="GO:0004518">
    <property type="term" value="F:nuclease activity"/>
    <property type="evidence" value="ECO:0007669"/>
    <property type="project" value="UniProtKB-KW"/>
</dbReference>
<dbReference type="GO" id="GO:0000967">
    <property type="term" value="P:rRNA 5'-end processing"/>
    <property type="evidence" value="ECO:0007669"/>
    <property type="project" value="UniProtKB-UniRule"/>
</dbReference>
<dbReference type="CDD" id="cd16964">
    <property type="entry name" value="YqgF"/>
    <property type="match status" value="1"/>
</dbReference>
<dbReference type="FunFam" id="3.30.420.140:FF:000002">
    <property type="entry name" value="Putative pre-16S rRNA nuclease"/>
    <property type="match status" value="1"/>
</dbReference>
<dbReference type="Gene3D" id="3.30.420.140">
    <property type="entry name" value="YqgF/RNase H-like domain"/>
    <property type="match status" value="1"/>
</dbReference>
<dbReference type="HAMAP" id="MF_00651">
    <property type="entry name" value="Nuclease_YqgF"/>
    <property type="match status" value="1"/>
</dbReference>
<dbReference type="InterPro" id="IPR012337">
    <property type="entry name" value="RNaseH-like_sf"/>
</dbReference>
<dbReference type="InterPro" id="IPR005227">
    <property type="entry name" value="YqgF"/>
</dbReference>
<dbReference type="InterPro" id="IPR006641">
    <property type="entry name" value="YqgF/RNaseH-like_dom"/>
</dbReference>
<dbReference type="InterPro" id="IPR037027">
    <property type="entry name" value="YqgF/RNaseH-like_dom_sf"/>
</dbReference>
<dbReference type="NCBIfam" id="TIGR00250">
    <property type="entry name" value="RNAse_H_YqgF"/>
    <property type="match status" value="1"/>
</dbReference>
<dbReference type="PANTHER" id="PTHR33317">
    <property type="entry name" value="POLYNUCLEOTIDYL TRANSFERASE, RIBONUCLEASE H-LIKE SUPERFAMILY PROTEIN"/>
    <property type="match status" value="1"/>
</dbReference>
<dbReference type="PANTHER" id="PTHR33317:SF4">
    <property type="entry name" value="POLYNUCLEOTIDYL TRANSFERASE, RIBONUCLEASE H-LIKE SUPERFAMILY PROTEIN"/>
    <property type="match status" value="1"/>
</dbReference>
<dbReference type="Pfam" id="PF03652">
    <property type="entry name" value="RuvX"/>
    <property type="match status" value="1"/>
</dbReference>
<dbReference type="SMART" id="SM00732">
    <property type="entry name" value="YqgFc"/>
    <property type="match status" value="1"/>
</dbReference>
<dbReference type="SUPFAM" id="SSF53098">
    <property type="entry name" value="Ribonuclease H-like"/>
    <property type="match status" value="1"/>
</dbReference>
<name>YQGF_ALIF1</name>
<evidence type="ECO:0000255" key="1">
    <source>
        <dbReference type="HAMAP-Rule" id="MF_00651"/>
    </source>
</evidence>
<organism>
    <name type="scientific">Aliivibrio fischeri (strain ATCC 700601 / ES114)</name>
    <name type="common">Vibrio fischeri</name>
    <dbReference type="NCBI Taxonomy" id="312309"/>
    <lineage>
        <taxon>Bacteria</taxon>
        <taxon>Pseudomonadati</taxon>
        <taxon>Pseudomonadota</taxon>
        <taxon>Gammaproteobacteria</taxon>
        <taxon>Vibrionales</taxon>
        <taxon>Vibrionaceae</taxon>
        <taxon>Aliivibrio</taxon>
    </lineage>
</organism>
<sequence>MSSRTIMAFDFGTKSIGSAIGQEITGTASPLKAFKAQDGTPNWDDIEKQIKEWNPDLIVVGLPTDLHGKELDTITPRAKKFANRLHGRFGKQVELHDERLSTAEARADLFEFGGYKALSKGNIDCQSAVVILESWFENQWG</sequence>